<reference key="1">
    <citation type="submission" date="2007-03" db="EMBL/GenBank/DDBJ databases">
        <title>Sequencing analysis of Aethionema grandiflorum chloroplast DNA.</title>
        <authorList>
            <person name="Hosouchi T."/>
            <person name="Tsuruoka H."/>
            <person name="Kotani H."/>
        </authorList>
    </citation>
    <scope>NUCLEOTIDE SEQUENCE [LARGE SCALE GENOMIC DNA]</scope>
</reference>
<gene>
    <name evidence="1" type="primary">atpI</name>
</gene>
<feature type="chain" id="PRO_0000362526" description="ATP synthase subunit a, chloroplastic">
    <location>
        <begin position="1"/>
        <end position="249"/>
    </location>
</feature>
<feature type="transmembrane region" description="Helical" evidence="1">
    <location>
        <begin position="40"/>
        <end position="60"/>
    </location>
</feature>
<feature type="transmembrane region" description="Helical" evidence="1">
    <location>
        <begin position="97"/>
        <end position="117"/>
    </location>
</feature>
<feature type="transmembrane region" description="Helical" evidence="1">
    <location>
        <begin position="136"/>
        <end position="156"/>
    </location>
</feature>
<feature type="transmembrane region" description="Helical" evidence="1">
    <location>
        <begin position="201"/>
        <end position="221"/>
    </location>
</feature>
<feature type="transmembrane region" description="Helical" evidence="1">
    <location>
        <begin position="222"/>
        <end position="242"/>
    </location>
</feature>
<sequence length="249" mass="27364">MNVLSCSINTLIKEGLYEISGVEVGQHFYWQIGGFQVHAQVLITSWVVIAILLGSAVLVVRNPQTIPTDGQNFFEFVLEFIRDVSKTQIGEEYGPWVPFIGTLFLFIFVSNWSGALLPWKIIQLPQGELAAPTNDINTTVALALLTSVAYFYAGLSKKGLGYFSKYIQPTPILLPINILEDFTKPLSLSFRLFGNILADELVVVVLVSLVPLVVPIPVMFLGLFTSGIQALIFATLAAAYIGESMEGHH</sequence>
<dbReference type="EMBL" id="AP009367">
    <property type="protein sequence ID" value="BAF49842.1"/>
    <property type="molecule type" value="Genomic_DNA"/>
</dbReference>
<dbReference type="RefSeq" id="YP_001123018.1">
    <property type="nucleotide sequence ID" value="NC_009266.1"/>
</dbReference>
<dbReference type="SMR" id="A4QJI7"/>
<dbReference type="GeneID" id="4962329"/>
<dbReference type="GO" id="GO:0009535">
    <property type="term" value="C:chloroplast thylakoid membrane"/>
    <property type="evidence" value="ECO:0007669"/>
    <property type="project" value="UniProtKB-SubCell"/>
</dbReference>
<dbReference type="GO" id="GO:0005886">
    <property type="term" value="C:plasma membrane"/>
    <property type="evidence" value="ECO:0007669"/>
    <property type="project" value="UniProtKB-UniRule"/>
</dbReference>
<dbReference type="GO" id="GO:0045259">
    <property type="term" value="C:proton-transporting ATP synthase complex"/>
    <property type="evidence" value="ECO:0007669"/>
    <property type="project" value="UniProtKB-KW"/>
</dbReference>
<dbReference type="GO" id="GO:0046933">
    <property type="term" value="F:proton-transporting ATP synthase activity, rotational mechanism"/>
    <property type="evidence" value="ECO:0007669"/>
    <property type="project" value="UniProtKB-UniRule"/>
</dbReference>
<dbReference type="CDD" id="cd00310">
    <property type="entry name" value="ATP-synt_Fo_a_6"/>
    <property type="match status" value="1"/>
</dbReference>
<dbReference type="FunFam" id="1.20.120.220:FF:000001">
    <property type="entry name" value="ATP synthase subunit a, chloroplastic"/>
    <property type="match status" value="1"/>
</dbReference>
<dbReference type="Gene3D" id="1.20.120.220">
    <property type="entry name" value="ATP synthase, F0 complex, subunit A"/>
    <property type="match status" value="1"/>
</dbReference>
<dbReference type="HAMAP" id="MF_01393">
    <property type="entry name" value="ATP_synth_a_bact"/>
    <property type="match status" value="1"/>
</dbReference>
<dbReference type="InterPro" id="IPR045082">
    <property type="entry name" value="ATP_syn_F0_a_bact/chloroplast"/>
</dbReference>
<dbReference type="InterPro" id="IPR000568">
    <property type="entry name" value="ATP_synth_F0_asu"/>
</dbReference>
<dbReference type="InterPro" id="IPR023011">
    <property type="entry name" value="ATP_synth_F0_asu_AS"/>
</dbReference>
<dbReference type="InterPro" id="IPR035908">
    <property type="entry name" value="F0_ATP_A_sf"/>
</dbReference>
<dbReference type="NCBIfam" id="TIGR01131">
    <property type="entry name" value="ATP_synt_6_or_A"/>
    <property type="match status" value="1"/>
</dbReference>
<dbReference type="PANTHER" id="PTHR42823">
    <property type="entry name" value="ATP SYNTHASE SUBUNIT A, CHLOROPLASTIC"/>
    <property type="match status" value="1"/>
</dbReference>
<dbReference type="PANTHER" id="PTHR42823:SF3">
    <property type="entry name" value="ATP SYNTHASE SUBUNIT A, CHLOROPLASTIC"/>
    <property type="match status" value="1"/>
</dbReference>
<dbReference type="Pfam" id="PF00119">
    <property type="entry name" value="ATP-synt_A"/>
    <property type="match status" value="1"/>
</dbReference>
<dbReference type="PRINTS" id="PR00123">
    <property type="entry name" value="ATPASEA"/>
</dbReference>
<dbReference type="SUPFAM" id="SSF81336">
    <property type="entry name" value="F1F0 ATP synthase subunit A"/>
    <property type="match status" value="1"/>
</dbReference>
<dbReference type="PROSITE" id="PS00449">
    <property type="entry name" value="ATPASE_A"/>
    <property type="match status" value="1"/>
</dbReference>
<proteinExistence type="inferred from homology"/>
<geneLocation type="chloroplast"/>
<name>ATPI_AETGR</name>
<protein>
    <recommendedName>
        <fullName evidence="1">ATP synthase subunit a, chloroplastic</fullName>
    </recommendedName>
    <alternativeName>
        <fullName evidence="1">ATP synthase F0 sector subunit a</fullName>
    </alternativeName>
    <alternativeName>
        <fullName evidence="1">F-ATPase subunit IV</fullName>
    </alternativeName>
</protein>
<organism>
    <name type="scientific">Aethionema grandiflorum</name>
    <name type="common">Persian stone-cress</name>
    <dbReference type="NCBI Taxonomy" id="72657"/>
    <lineage>
        <taxon>Eukaryota</taxon>
        <taxon>Viridiplantae</taxon>
        <taxon>Streptophyta</taxon>
        <taxon>Embryophyta</taxon>
        <taxon>Tracheophyta</taxon>
        <taxon>Spermatophyta</taxon>
        <taxon>Magnoliopsida</taxon>
        <taxon>eudicotyledons</taxon>
        <taxon>Gunneridae</taxon>
        <taxon>Pentapetalae</taxon>
        <taxon>rosids</taxon>
        <taxon>malvids</taxon>
        <taxon>Brassicales</taxon>
        <taxon>Brassicaceae</taxon>
        <taxon>Aethionemeae</taxon>
        <taxon>Aethionema</taxon>
    </lineage>
</organism>
<accession>A4QJI7</accession>
<comment type="function">
    <text evidence="1">Key component of the proton channel; it plays a direct role in the translocation of protons across the membrane.</text>
</comment>
<comment type="subunit">
    <text evidence="1">F-type ATPases have 2 components, CF(1) - the catalytic core - and CF(0) - the membrane proton channel. CF(1) has five subunits: alpha(3), beta(3), gamma(1), delta(1), epsilon(1). CF(0) has four main subunits: a, b, b' and c.</text>
</comment>
<comment type="subcellular location">
    <subcellularLocation>
        <location evidence="1">Plastid</location>
        <location evidence="1">Chloroplast thylakoid membrane</location>
        <topology evidence="1">Multi-pass membrane protein</topology>
    </subcellularLocation>
</comment>
<comment type="similarity">
    <text evidence="1">Belongs to the ATPase A chain family.</text>
</comment>
<evidence type="ECO:0000255" key="1">
    <source>
        <dbReference type="HAMAP-Rule" id="MF_01393"/>
    </source>
</evidence>
<keyword id="KW-0066">ATP synthesis</keyword>
<keyword id="KW-0138">CF(0)</keyword>
<keyword id="KW-0150">Chloroplast</keyword>
<keyword id="KW-0375">Hydrogen ion transport</keyword>
<keyword id="KW-0406">Ion transport</keyword>
<keyword id="KW-0472">Membrane</keyword>
<keyword id="KW-0934">Plastid</keyword>
<keyword id="KW-0793">Thylakoid</keyword>
<keyword id="KW-0812">Transmembrane</keyword>
<keyword id="KW-1133">Transmembrane helix</keyword>
<keyword id="KW-0813">Transport</keyword>